<reference key="1">
    <citation type="journal article" date="2007" name="J. Bacteriol.">
        <title>The genome sequence of avian pathogenic Escherichia coli strain O1:K1:H7 shares strong similarities with human extraintestinal pathogenic E. coli genomes.</title>
        <authorList>
            <person name="Johnson T.J."/>
            <person name="Kariyawasam S."/>
            <person name="Wannemuehler Y."/>
            <person name="Mangiamele P."/>
            <person name="Johnson S.J."/>
            <person name="Doetkott C."/>
            <person name="Skyberg J.A."/>
            <person name="Lynne A.M."/>
            <person name="Johnson J.R."/>
            <person name="Nolan L.K."/>
        </authorList>
    </citation>
    <scope>NUCLEOTIDE SEQUENCE [LARGE SCALE GENOMIC DNA]</scope>
</reference>
<feature type="chain" id="PRO_0000369923" description="Serine hydroxymethyltransferase">
    <location>
        <begin position="1"/>
        <end position="417"/>
    </location>
</feature>
<feature type="binding site" evidence="1">
    <location>
        <position position="121"/>
    </location>
    <ligand>
        <name>(6S)-5,6,7,8-tetrahydrofolate</name>
        <dbReference type="ChEBI" id="CHEBI:57453"/>
    </ligand>
</feature>
<feature type="binding site" evidence="1">
    <location>
        <begin position="125"/>
        <end position="127"/>
    </location>
    <ligand>
        <name>(6S)-5,6,7,8-tetrahydrofolate</name>
        <dbReference type="ChEBI" id="CHEBI:57453"/>
    </ligand>
</feature>
<feature type="binding site" evidence="1">
    <location>
        <begin position="355"/>
        <end position="357"/>
    </location>
    <ligand>
        <name>(6S)-5,6,7,8-tetrahydrofolate</name>
        <dbReference type="ChEBI" id="CHEBI:57453"/>
    </ligand>
</feature>
<feature type="site" description="Plays an important role in substrate specificity" evidence="1">
    <location>
        <position position="228"/>
    </location>
</feature>
<feature type="modified residue" description="N6-acetyllysine" evidence="1">
    <location>
        <position position="54"/>
    </location>
</feature>
<feature type="modified residue" description="N6-(pyridoxal phosphate)lysine" evidence="1">
    <location>
        <position position="229"/>
    </location>
</feature>
<feature type="modified residue" description="N6-acetyllysine" evidence="1">
    <location>
        <position position="250"/>
    </location>
</feature>
<feature type="modified residue" description="N6-acetyllysine" evidence="1">
    <location>
        <position position="285"/>
    </location>
</feature>
<feature type="modified residue" description="N6-acetyllysine" evidence="1">
    <location>
        <position position="354"/>
    </location>
</feature>
<feature type="modified residue" description="N6-acetyllysine" evidence="1">
    <location>
        <position position="375"/>
    </location>
</feature>
<protein>
    <recommendedName>
        <fullName evidence="1">Serine hydroxymethyltransferase</fullName>
        <shortName evidence="1">SHMT</shortName>
        <shortName evidence="1">Serine methylase</shortName>
        <ecNumber evidence="1">2.1.2.1</ecNumber>
    </recommendedName>
</protein>
<proteinExistence type="inferred from homology"/>
<accession>A1AE82</accession>
<sequence>MLKREMNIADYDAELWQAMEQEKVRQEEHIELIASENYTSPRVMQAQGSQLTNKYAEGYPGKRYYGGCEYVDIVEQLAIDRAKELFGADYANVQPHSGSQANFAVYTALLEPGDTVLGMNLAHGGHLTHGSPVNFSGKLYNIVPYGIDATGHIDYADLEKQAKEHKPKMIIGGFSAYSGVVDWAKMREIADSIGAYLFVDMAHVAGLVAAGVYPNPVPHAHVVTTTTHKTLAGPRGGLILAKGGSEELYKKLNSAVFPGGQGGPLMHVIAGKAVALKEAMEPEFKTYQQQVAKNAKAMVEVFLERGYKVVSGGTDNHLFLVDLVDKNLTGKEADAALGRANITVNKNSVPNDPKSPFVTSGIRVGTPAITRRGFKEAEAKELAGWMCDVLDSINDEAVIERIKGKVLDICARYPVYA</sequence>
<organism>
    <name type="scientific">Escherichia coli O1:K1 / APEC</name>
    <dbReference type="NCBI Taxonomy" id="405955"/>
    <lineage>
        <taxon>Bacteria</taxon>
        <taxon>Pseudomonadati</taxon>
        <taxon>Pseudomonadota</taxon>
        <taxon>Gammaproteobacteria</taxon>
        <taxon>Enterobacterales</taxon>
        <taxon>Enterobacteriaceae</taxon>
        <taxon>Escherichia</taxon>
    </lineage>
</organism>
<name>GLYA_ECOK1</name>
<comment type="function">
    <text evidence="1">Catalyzes the reversible interconversion of serine and glycine with tetrahydrofolate (THF) serving as the one-carbon carrier. This reaction serves as the major source of one-carbon groups required for the biosynthesis of purines, thymidylate, methionine, and other important biomolecules. Also exhibits THF-independent aldolase activity toward beta-hydroxyamino acids, producing glycine and aldehydes, via a retro-aldol mechanism.</text>
</comment>
<comment type="catalytic activity">
    <reaction evidence="1">
        <text>(6R)-5,10-methylene-5,6,7,8-tetrahydrofolate + glycine + H2O = (6S)-5,6,7,8-tetrahydrofolate + L-serine</text>
        <dbReference type="Rhea" id="RHEA:15481"/>
        <dbReference type="ChEBI" id="CHEBI:15377"/>
        <dbReference type="ChEBI" id="CHEBI:15636"/>
        <dbReference type="ChEBI" id="CHEBI:33384"/>
        <dbReference type="ChEBI" id="CHEBI:57305"/>
        <dbReference type="ChEBI" id="CHEBI:57453"/>
        <dbReference type="EC" id="2.1.2.1"/>
    </reaction>
</comment>
<comment type="cofactor">
    <cofactor evidence="1">
        <name>pyridoxal 5'-phosphate</name>
        <dbReference type="ChEBI" id="CHEBI:597326"/>
    </cofactor>
</comment>
<comment type="pathway">
    <text evidence="1">One-carbon metabolism; tetrahydrofolate interconversion.</text>
</comment>
<comment type="pathway">
    <text evidence="1">Amino-acid biosynthesis; glycine biosynthesis; glycine from L-serine: step 1/1.</text>
</comment>
<comment type="subunit">
    <text evidence="1">Homodimer.</text>
</comment>
<comment type="subcellular location">
    <subcellularLocation>
        <location evidence="1">Cytoplasm</location>
    </subcellularLocation>
</comment>
<comment type="similarity">
    <text evidence="1">Belongs to the SHMT family.</text>
</comment>
<comment type="sequence caution" evidence="2">
    <conflict type="erroneous initiation">
        <sequence resource="EMBL-CDS" id="ABJ01972"/>
    </conflict>
</comment>
<dbReference type="EC" id="2.1.2.1" evidence="1"/>
<dbReference type="EMBL" id="CP000468">
    <property type="protein sequence ID" value="ABJ01972.1"/>
    <property type="status" value="ALT_INIT"/>
    <property type="molecule type" value="Genomic_DNA"/>
</dbReference>
<dbReference type="RefSeq" id="WP_000919159.1">
    <property type="nucleotide sequence ID" value="NZ_CADILS010000012.1"/>
</dbReference>
<dbReference type="SMR" id="A1AE82"/>
<dbReference type="GeneID" id="89517346"/>
<dbReference type="KEGG" id="ecv:APECO1_3980"/>
<dbReference type="HOGENOM" id="CLU_022477_2_1_6"/>
<dbReference type="UniPathway" id="UPA00193"/>
<dbReference type="UniPathway" id="UPA00288">
    <property type="reaction ID" value="UER01023"/>
</dbReference>
<dbReference type="Proteomes" id="UP000008216">
    <property type="component" value="Chromosome"/>
</dbReference>
<dbReference type="GO" id="GO:0005829">
    <property type="term" value="C:cytosol"/>
    <property type="evidence" value="ECO:0007669"/>
    <property type="project" value="TreeGrafter"/>
</dbReference>
<dbReference type="GO" id="GO:0004372">
    <property type="term" value="F:glycine hydroxymethyltransferase activity"/>
    <property type="evidence" value="ECO:0007669"/>
    <property type="project" value="UniProtKB-UniRule"/>
</dbReference>
<dbReference type="GO" id="GO:0030170">
    <property type="term" value="F:pyridoxal phosphate binding"/>
    <property type="evidence" value="ECO:0007669"/>
    <property type="project" value="UniProtKB-UniRule"/>
</dbReference>
<dbReference type="GO" id="GO:0019264">
    <property type="term" value="P:glycine biosynthetic process from serine"/>
    <property type="evidence" value="ECO:0007669"/>
    <property type="project" value="UniProtKB-UniRule"/>
</dbReference>
<dbReference type="GO" id="GO:0035999">
    <property type="term" value="P:tetrahydrofolate interconversion"/>
    <property type="evidence" value="ECO:0007669"/>
    <property type="project" value="UniProtKB-UniRule"/>
</dbReference>
<dbReference type="CDD" id="cd00378">
    <property type="entry name" value="SHMT"/>
    <property type="match status" value="1"/>
</dbReference>
<dbReference type="FunFam" id="3.40.640.10:FF:000001">
    <property type="entry name" value="Serine hydroxymethyltransferase"/>
    <property type="match status" value="1"/>
</dbReference>
<dbReference type="FunFam" id="3.90.1150.10:FF:000003">
    <property type="entry name" value="Serine hydroxymethyltransferase"/>
    <property type="match status" value="1"/>
</dbReference>
<dbReference type="Gene3D" id="3.90.1150.10">
    <property type="entry name" value="Aspartate Aminotransferase, domain 1"/>
    <property type="match status" value="1"/>
</dbReference>
<dbReference type="Gene3D" id="3.40.640.10">
    <property type="entry name" value="Type I PLP-dependent aspartate aminotransferase-like (Major domain)"/>
    <property type="match status" value="1"/>
</dbReference>
<dbReference type="HAMAP" id="MF_00051">
    <property type="entry name" value="SHMT"/>
    <property type="match status" value="1"/>
</dbReference>
<dbReference type="InterPro" id="IPR015424">
    <property type="entry name" value="PyrdxlP-dep_Trfase"/>
</dbReference>
<dbReference type="InterPro" id="IPR015421">
    <property type="entry name" value="PyrdxlP-dep_Trfase_major"/>
</dbReference>
<dbReference type="InterPro" id="IPR015422">
    <property type="entry name" value="PyrdxlP-dep_Trfase_small"/>
</dbReference>
<dbReference type="InterPro" id="IPR001085">
    <property type="entry name" value="Ser_HO-MeTrfase"/>
</dbReference>
<dbReference type="InterPro" id="IPR049943">
    <property type="entry name" value="Ser_HO-MeTrfase-like"/>
</dbReference>
<dbReference type="InterPro" id="IPR019798">
    <property type="entry name" value="Ser_HO-MeTrfase_PLP_BS"/>
</dbReference>
<dbReference type="InterPro" id="IPR039429">
    <property type="entry name" value="SHMT-like_dom"/>
</dbReference>
<dbReference type="NCBIfam" id="NF000586">
    <property type="entry name" value="PRK00011.1"/>
    <property type="match status" value="1"/>
</dbReference>
<dbReference type="PANTHER" id="PTHR11680">
    <property type="entry name" value="SERINE HYDROXYMETHYLTRANSFERASE"/>
    <property type="match status" value="1"/>
</dbReference>
<dbReference type="PANTHER" id="PTHR11680:SF50">
    <property type="entry name" value="SERINE HYDROXYMETHYLTRANSFERASE"/>
    <property type="match status" value="1"/>
</dbReference>
<dbReference type="Pfam" id="PF00464">
    <property type="entry name" value="SHMT"/>
    <property type="match status" value="1"/>
</dbReference>
<dbReference type="PIRSF" id="PIRSF000412">
    <property type="entry name" value="SHMT"/>
    <property type="match status" value="1"/>
</dbReference>
<dbReference type="SUPFAM" id="SSF53383">
    <property type="entry name" value="PLP-dependent transferases"/>
    <property type="match status" value="1"/>
</dbReference>
<dbReference type="PROSITE" id="PS00096">
    <property type="entry name" value="SHMT"/>
    <property type="match status" value="1"/>
</dbReference>
<evidence type="ECO:0000255" key="1">
    <source>
        <dbReference type="HAMAP-Rule" id="MF_00051"/>
    </source>
</evidence>
<evidence type="ECO:0000305" key="2"/>
<gene>
    <name evidence="1" type="primary">glyA</name>
    <name type="ordered locus">Ecok1_24780</name>
    <name type="ORF">APECO1_3980</name>
</gene>
<keyword id="KW-0007">Acetylation</keyword>
<keyword id="KW-0028">Amino-acid biosynthesis</keyword>
<keyword id="KW-0963">Cytoplasm</keyword>
<keyword id="KW-0554">One-carbon metabolism</keyword>
<keyword id="KW-0663">Pyridoxal phosphate</keyword>
<keyword id="KW-1185">Reference proteome</keyword>
<keyword id="KW-0808">Transferase</keyword>